<dbReference type="EMBL" id="AB007447">
    <property type="protein sequence ID" value="BAA22541.1"/>
    <property type="molecule type" value="mRNA"/>
</dbReference>
<dbReference type="EMBL" id="AK291331">
    <property type="protein sequence ID" value="BAF84020.1"/>
    <property type="molecule type" value="mRNA"/>
</dbReference>
<dbReference type="EMBL" id="AK295474">
    <property type="protein sequence ID" value="BAG58401.1"/>
    <property type="molecule type" value="mRNA"/>
</dbReference>
<dbReference type="EMBL" id="AC073575">
    <property type="status" value="NOT_ANNOTATED_CDS"/>
    <property type="molecule type" value="Genomic_DNA"/>
</dbReference>
<dbReference type="EMBL" id="BC003553">
    <property type="protein sequence ID" value="AAH03553.1"/>
    <property type="molecule type" value="mRNA"/>
</dbReference>
<dbReference type="CCDS" id="CCDS9160.1">
    <molecule id="O14545-1"/>
</dbReference>
<dbReference type="RefSeq" id="NP_001137378.1">
    <molecule id="O14545-1"/>
    <property type="nucleotide sequence ID" value="NM_001143906.2"/>
</dbReference>
<dbReference type="RefSeq" id="NP_006691.1">
    <molecule id="O14545-1"/>
    <property type="nucleotide sequence ID" value="NM_006700.3"/>
</dbReference>
<dbReference type="PDB" id="2D9K">
    <property type="method" value="NMR"/>
    <property type="chains" value="A=78-139"/>
</dbReference>
<dbReference type="PDBsum" id="2D9K"/>
<dbReference type="BMRB" id="O14545"/>
<dbReference type="SMR" id="O14545"/>
<dbReference type="BioGRID" id="116112">
    <property type="interactions" value="82"/>
</dbReference>
<dbReference type="FunCoup" id="O14545">
    <property type="interactions" value="1675"/>
</dbReference>
<dbReference type="IntAct" id="O14545">
    <property type="interactions" value="43"/>
</dbReference>
<dbReference type="MINT" id="O14545"/>
<dbReference type="STRING" id="9606.ENSP00000257604"/>
<dbReference type="GlyCosmos" id="O14545">
    <property type="glycosylation" value="2 sites, 1 glycan"/>
</dbReference>
<dbReference type="GlyGen" id="O14545">
    <property type="glycosylation" value="5 sites, 1 N-linked glycan (1 site), 1 O-linked glycan (2 sites)"/>
</dbReference>
<dbReference type="iPTMnet" id="O14545"/>
<dbReference type="PhosphoSitePlus" id="O14545"/>
<dbReference type="BioMuta" id="TRAFD1"/>
<dbReference type="jPOST" id="O14545"/>
<dbReference type="MassIVE" id="O14545"/>
<dbReference type="PaxDb" id="9606-ENSP00000257604"/>
<dbReference type="PeptideAtlas" id="O14545"/>
<dbReference type="ProteomicsDB" id="4284"/>
<dbReference type="ProteomicsDB" id="48080">
    <molecule id="O14545-1"/>
</dbReference>
<dbReference type="Pumba" id="O14545"/>
<dbReference type="Antibodypedia" id="18647">
    <property type="antibodies" value="218 antibodies from 26 providers"/>
</dbReference>
<dbReference type="DNASU" id="10906"/>
<dbReference type="Ensembl" id="ENST00000257604.9">
    <molecule id="O14545-1"/>
    <property type="protein sequence ID" value="ENSP00000257604.5"/>
    <property type="gene ID" value="ENSG00000135148.12"/>
</dbReference>
<dbReference type="Ensembl" id="ENST00000412615.7">
    <molecule id="O14545-1"/>
    <property type="protein sequence ID" value="ENSP00000396526.2"/>
    <property type="gene ID" value="ENSG00000135148.12"/>
</dbReference>
<dbReference type="Ensembl" id="ENST00000552890.5">
    <molecule id="O14545-2"/>
    <property type="protein sequence ID" value="ENSP00000447340.1"/>
    <property type="gene ID" value="ENSG00000135148.12"/>
</dbReference>
<dbReference type="GeneID" id="10906"/>
<dbReference type="KEGG" id="hsa:10906"/>
<dbReference type="MANE-Select" id="ENST00000412615.7">
    <property type="protein sequence ID" value="ENSP00000396526.2"/>
    <property type="RefSeq nucleotide sequence ID" value="NM_006700.3"/>
    <property type="RefSeq protein sequence ID" value="NP_006691.1"/>
</dbReference>
<dbReference type="UCSC" id="uc001tto.4">
    <molecule id="O14545-1"/>
    <property type="organism name" value="human"/>
</dbReference>
<dbReference type="AGR" id="HGNC:24808"/>
<dbReference type="CTD" id="10906"/>
<dbReference type="DisGeNET" id="10906"/>
<dbReference type="GeneCards" id="TRAFD1"/>
<dbReference type="HGNC" id="HGNC:24808">
    <property type="gene designation" value="TRAFD1"/>
</dbReference>
<dbReference type="HPA" id="ENSG00000135148">
    <property type="expression patterns" value="Low tissue specificity"/>
</dbReference>
<dbReference type="MIM" id="613197">
    <property type="type" value="gene"/>
</dbReference>
<dbReference type="neXtProt" id="NX_O14545"/>
<dbReference type="OpenTargets" id="ENSG00000135148"/>
<dbReference type="PharmGKB" id="PA142670704"/>
<dbReference type="VEuPathDB" id="HostDB:ENSG00000135148"/>
<dbReference type="eggNOG" id="ENOG502QQRU">
    <property type="taxonomic scope" value="Eukaryota"/>
</dbReference>
<dbReference type="GeneTree" id="ENSGT00530000063869"/>
<dbReference type="HOGENOM" id="CLU_034057_0_0_1"/>
<dbReference type="InParanoid" id="O14545"/>
<dbReference type="OMA" id="AHQSSEC"/>
<dbReference type="OrthoDB" id="193703at2759"/>
<dbReference type="PAN-GO" id="O14545">
    <property type="GO annotations" value="0 GO annotations based on evolutionary models"/>
</dbReference>
<dbReference type="PhylomeDB" id="O14545"/>
<dbReference type="TreeFam" id="TF331416"/>
<dbReference type="PathwayCommons" id="O14545"/>
<dbReference type="SignaLink" id="O14545"/>
<dbReference type="BioGRID-ORCS" id="10906">
    <property type="hits" value="8 hits in 1154 CRISPR screens"/>
</dbReference>
<dbReference type="ChiTaRS" id="TRAFD1">
    <property type="organism name" value="human"/>
</dbReference>
<dbReference type="EvolutionaryTrace" id="O14545"/>
<dbReference type="GeneWiki" id="TRAFD1"/>
<dbReference type="GenomeRNAi" id="10906"/>
<dbReference type="Pharos" id="O14545">
    <property type="development level" value="Tbio"/>
</dbReference>
<dbReference type="PRO" id="PR:O14545"/>
<dbReference type="Proteomes" id="UP000005640">
    <property type="component" value="Chromosome 12"/>
</dbReference>
<dbReference type="RNAct" id="O14545">
    <property type="molecule type" value="protein"/>
</dbReference>
<dbReference type="Bgee" id="ENSG00000135148">
    <property type="expression patterns" value="Expressed in secondary oocyte and 198 other cell types or tissues"/>
</dbReference>
<dbReference type="ExpressionAtlas" id="O14545">
    <property type="expression patterns" value="baseline and differential"/>
</dbReference>
<dbReference type="GO" id="GO:0005739">
    <property type="term" value="C:mitochondrion"/>
    <property type="evidence" value="ECO:0000318"/>
    <property type="project" value="GO_Central"/>
</dbReference>
<dbReference type="GO" id="GO:0008270">
    <property type="term" value="F:zinc ion binding"/>
    <property type="evidence" value="ECO:0007669"/>
    <property type="project" value="UniProtKB-KW"/>
</dbReference>
<dbReference type="GO" id="GO:0045824">
    <property type="term" value="P:negative regulation of innate immune response"/>
    <property type="evidence" value="ECO:0000250"/>
    <property type="project" value="UniProtKB"/>
</dbReference>
<dbReference type="FunFam" id="3.30.40.10:FF:000378">
    <property type="entry name" value="TRAF-type zinc finger domain-containing 1"/>
    <property type="match status" value="1"/>
</dbReference>
<dbReference type="FunFam" id="3.30.40.10:FF:000402">
    <property type="entry name" value="TRAF-type zinc finger domain-containing protein 1"/>
    <property type="match status" value="1"/>
</dbReference>
<dbReference type="Gene3D" id="3.30.40.10">
    <property type="entry name" value="Zinc/RING finger domain, C3HC4 (zinc finger)"/>
    <property type="match status" value="2"/>
</dbReference>
<dbReference type="InterPro" id="IPR051986">
    <property type="entry name" value="Innate_Immune_Apopt_Reg"/>
</dbReference>
<dbReference type="InterPro" id="IPR049439">
    <property type="entry name" value="TRAFD1-XIAF1_Znf"/>
</dbReference>
<dbReference type="InterPro" id="IPR013083">
    <property type="entry name" value="Znf_RING/FYVE/PHD"/>
</dbReference>
<dbReference type="PANTHER" id="PTHR16295:SF19">
    <property type="entry name" value="TRAF-TYPE ZINC FINGER DOMAIN-CONTAINING PROTEIN 1"/>
    <property type="match status" value="1"/>
</dbReference>
<dbReference type="PANTHER" id="PTHR16295">
    <property type="entry name" value="TRAF-TYPE ZINC FINGER PROTEIN-RELATED"/>
    <property type="match status" value="1"/>
</dbReference>
<dbReference type="Pfam" id="PF21366">
    <property type="entry name" value="TRAFD1-XIAF1_ZnF"/>
    <property type="match status" value="1"/>
</dbReference>
<accession>O14545</accession>
<accession>A8K5L6</accession>
<accession>B4DI89</accession>
<evidence type="ECO:0000250" key="1"/>
<evidence type="ECO:0000256" key="2">
    <source>
        <dbReference type="SAM" id="MobiDB-lite"/>
    </source>
</evidence>
<evidence type="ECO:0000269" key="3">
    <source>
    </source>
</evidence>
<evidence type="ECO:0000269" key="4">
    <source ref="19"/>
</evidence>
<evidence type="ECO:0000303" key="5">
    <source>
    </source>
</evidence>
<evidence type="ECO:0000305" key="6"/>
<evidence type="ECO:0007744" key="7">
    <source>
    </source>
</evidence>
<evidence type="ECO:0007744" key="8">
    <source>
    </source>
</evidence>
<evidence type="ECO:0007744" key="9">
    <source>
    </source>
</evidence>
<evidence type="ECO:0007744" key="10">
    <source>
    </source>
</evidence>
<evidence type="ECO:0007744" key="11">
    <source>
    </source>
</evidence>
<evidence type="ECO:0007744" key="12">
    <source>
    </source>
</evidence>
<evidence type="ECO:0007744" key="13">
    <source>
    </source>
</evidence>
<evidence type="ECO:0007744" key="14">
    <source>
    </source>
</evidence>
<evidence type="ECO:0007829" key="15">
    <source>
        <dbReference type="PDB" id="2D9K"/>
    </source>
</evidence>
<reference key="1">
    <citation type="submission" date="1997-09" db="EMBL/GenBank/DDBJ databases">
        <title>TRAF interacting Zn finger protein.</title>
        <authorList>
            <person name="Nezu J."/>
        </authorList>
    </citation>
    <scope>NUCLEOTIDE SEQUENCE [MRNA] (ISOFORM 1)</scope>
    <source>
        <tissue>Brain</tissue>
    </source>
</reference>
<reference key="2">
    <citation type="journal article" date="2004" name="Nat. Genet.">
        <title>Complete sequencing and characterization of 21,243 full-length human cDNAs.</title>
        <authorList>
            <person name="Ota T."/>
            <person name="Suzuki Y."/>
            <person name="Nishikawa T."/>
            <person name="Otsuki T."/>
            <person name="Sugiyama T."/>
            <person name="Irie R."/>
            <person name="Wakamatsu A."/>
            <person name="Hayashi K."/>
            <person name="Sato H."/>
            <person name="Nagai K."/>
            <person name="Kimura K."/>
            <person name="Makita H."/>
            <person name="Sekine M."/>
            <person name="Obayashi M."/>
            <person name="Nishi T."/>
            <person name="Shibahara T."/>
            <person name="Tanaka T."/>
            <person name="Ishii S."/>
            <person name="Yamamoto J."/>
            <person name="Saito K."/>
            <person name="Kawai Y."/>
            <person name="Isono Y."/>
            <person name="Nakamura Y."/>
            <person name="Nagahari K."/>
            <person name="Murakami K."/>
            <person name="Yasuda T."/>
            <person name="Iwayanagi T."/>
            <person name="Wagatsuma M."/>
            <person name="Shiratori A."/>
            <person name="Sudo H."/>
            <person name="Hosoiri T."/>
            <person name="Kaku Y."/>
            <person name="Kodaira H."/>
            <person name="Kondo H."/>
            <person name="Sugawara M."/>
            <person name="Takahashi M."/>
            <person name="Kanda K."/>
            <person name="Yokoi T."/>
            <person name="Furuya T."/>
            <person name="Kikkawa E."/>
            <person name="Omura Y."/>
            <person name="Abe K."/>
            <person name="Kamihara K."/>
            <person name="Katsuta N."/>
            <person name="Sato K."/>
            <person name="Tanikawa M."/>
            <person name="Yamazaki M."/>
            <person name="Ninomiya K."/>
            <person name="Ishibashi T."/>
            <person name="Yamashita H."/>
            <person name="Murakawa K."/>
            <person name="Fujimori K."/>
            <person name="Tanai H."/>
            <person name="Kimata M."/>
            <person name="Watanabe M."/>
            <person name="Hiraoka S."/>
            <person name="Chiba Y."/>
            <person name="Ishida S."/>
            <person name="Ono Y."/>
            <person name="Takiguchi S."/>
            <person name="Watanabe S."/>
            <person name="Yosida M."/>
            <person name="Hotuta T."/>
            <person name="Kusano J."/>
            <person name="Kanehori K."/>
            <person name="Takahashi-Fujii A."/>
            <person name="Hara H."/>
            <person name="Tanase T.-O."/>
            <person name="Nomura Y."/>
            <person name="Togiya S."/>
            <person name="Komai F."/>
            <person name="Hara R."/>
            <person name="Takeuchi K."/>
            <person name="Arita M."/>
            <person name="Imose N."/>
            <person name="Musashino K."/>
            <person name="Yuuki H."/>
            <person name="Oshima A."/>
            <person name="Sasaki N."/>
            <person name="Aotsuka S."/>
            <person name="Yoshikawa Y."/>
            <person name="Matsunawa H."/>
            <person name="Ichihara T."/>
            <person name="Shiohata N."/>
            <person name="Sano S."/>
            <person name="Moriya S."/>
            <person name="Momiyama H."/>
            <person name="Satoh N."/>
            <person name="Takami S."/>
            <person name="Terashima Y."/>
            <person name="Suzuki O."/>
            <person name="Nakagawa S."/>
            <person name="Senoh A."/>
            <person name="Mizoguchi H."/>
            <person name="Goto Y."/>
            <person name="Shimizu F."/>
            <person name="Wakebe H."/>
            <person name="Hishigaki H."/>
            <person name="Watanabe T."/>
            <person name="Sugiyama A."/>
            <person name="Takemoto M."/>
            <person name="Kawakami B."/>
            <person name="Yamazaki M."/>
            <person name="Watanabe K."/>
            <person name="Kumagai A."/>
            <person name="Itakura S."/>
            <person name="Fukuzumi Y."/>
            <person name="Fujimori Y."/>
            <person name="Komiyama M."/>
            <person name="Tashiro H."/>
            <person name="Tanigami A."/>
            <person name="Fujiwara T."/>
            <person name="Ono T."/>
            <person name="Yamada K."/>
            <person name="Fujii Y."/>
            <person name="Ozaki K."/>
            <person name="Hirao M."/>
            <person name="Ohmori Y."/>
            <person name="Kawabata A."/>
            <person name="Hikiji T."/>
            <person name="Kobatake N."/>
            <person name="Inagaki H."/>
            <person name="Ikema Y."/>
            <person name="Okamoto S."/>
            <person name="Okitani R."/>
            <person name="Kawakami T."/>
            <person name="Noguchi S."/>
            <person name="Itoh T."/>
            <person name="Shigeta K."/>
            <person name="Senba T."/>
            <person name="Matsumura K."/>
            <person name="Nakajima Y."/>
            <person name="Mizuno T."/>
            <person name="Morinaga M."/>
            <person name="Sasaki M."/>
            <person name="Togashi T."/>
            <person name="Oyama M."/>
            <person name="Hata H."/>
            <person name="Watanabe M."/>
            <person name="Komatsu T."/>
            <person name="Mizushima-Sugano J."/>
            <person name="Satoh T."/>
            <person name="Shirai Y."/>
            <person name="Takahashi Y."/>
            <person name="Nakagawa K."/>
            <person name="Okumura K."/>
            <person name="Nagase T."/>
            <person name="Nomura N."/>
            <person name="Kikuchi H."/>
            <person name="Masuho Y."/>
            <person name="Yamashita R."/>
            <person name="Nakai K."/>
            <person name="Yada T."/>
            <person name="Nakamura Y."/>
            <person name="Ohara O."/>
            <person name="Isogai T."/>
            <person name="Sugano S."/>
        </authorList>
    </citation>
    <scope>NUCLEOTIDE SEQUENCE [LARGE SCALE MRNA] (ISOFORMS 1 AND 2)</scope>
    <source>
        <tissue>Hippocampus</tissue>
        <tissue>Tongue</tissue>
    </source>
</reference>
<reference key="3">
    <citation type="journal article" date="2006" name="Nature">
        <title>The finished DNA sequence of human chromosome 12.</title>
        <authorList>
            <person name="Scherer S.E."/>
            <person name="Muzny D.M."/>
            <person name="Buhay C.J."/>
            <person name="Chen R."/>
            <person name="Cree A."/>
            <person name="Ding Y."/>
            <person name="Dugan-Rocha S."/>
            <person name="Gill R."/>
            <person name="Gunaratne P."/>
            <person name="Harris R.A."/>
            <person name="Hawes A.C."/>
            <person name="Hernandez J."/>
            <person name="Hodgson A.V."/>
            <person name="Hume J."/>
            <person name="Jackson A."/>
            <person name="Khan Z.M."/>
            <person name="Kovar-Smith C."/>
            <person name="Lewis L.R."/>
            <person name="Lozado R.J."/>
            <person name="Metzker M.L."/>
            <person name="Milosavljevic A."/>
            <person name="Miner G.R."/>
            <person name="Montgomery K.T."/>
            <person name="Morgan M.B."/>
            <person name="Nazareth L.V."/>
            <person name="Scott G."/>
            <person name="Sodergren E."/>
            <person name="Song X.-Z."/>
            <person name="Steffen D."/>
            <person name="Lovering R.C."/>
            <person name="Wheeler D.A."/>
            <person name="Worley K.C."/>
            <person name="Yuan Y."/>
            <person name="Zhang Z."/>
            <person name="Adams C.Q."/>
            <person name="Ansari-Lari M.A."/>
            <person name="Ayele M."/>
            <person name="Brown M.J."/>
            <person name="Chen G."/>
            <person name="Chen Z."/>
            <person name="Clerc-Blankenburg K.P."/>
            <person name="Davis C."/>
            <person name="Delgado O."/>
            <person name="Dinh H.H."/>
            <person name="Draper H."/>
            <person name="Gonzalez-Garay M.L."/>
            <person name="Havlak P."/>
            <person name="Jackson L.R."/>
            <person name="Jacob L.S."/>
            <person name="Kelly S.H."/>
            <person name="Li L."/>
            <person name="Li Z."/>
            <person name="Liu J."/>
            <person name="Liu W."/>
            <person name="Lu J."/>
            <person name="Maheshwari M."/>
            <person name="Nguyen B.-V."/>
            <person name="Okwuonu G.O."/>
            <person name="Pasternak S."/>
            <person name="Perez L.M."/>
            <person name="Plopper F.J.H."/>
            <person name="Santibanez J."/>
            <person name="Shen H."/>
            <person name="Tabor P.E."/>
            <person name="Verduzco D."/>
            <person name="Waldron L."/>
            <person name="Wang Q."/>
            <person name="Williams G.A."/>
            <person name="Zhang J."/>
            <person name="Zhou J."/>
            <person name="Allen C.C."/>
            <person name="Amin A.G."/>
            <person name="Anyalebechi V."/>
            <person name="Bailey M."/>
            <person name="Barbaria J.A."/>
            <person name="Bimage K.E."/>
            <person name="Bryant N.P."/>
            <person name="Burch P.E."/>
            <person name="Burkett C.E."/>
            <person name="Burrell K.L."/>
            <person name="Calderon E."/>
            <person name="Cardenas V."/>
            <person name="Carter K."/>
            <person name="Casias K."/>
            <person name="Cavazos I."/>
            <person name="Cavazos S.R."/>
            <person name="Ceasar H."/>
            <person name="Chacko J."/>
            <person name="Chan S.N."/>
            <person name="Chavez D."/>
            <person name="Christopoulos C."/>
            <person name="Chu J."/>
            <person name="Cockrell R."/>
            <person name="Cox C.D."/>
            <person name="Dang M."/>
            <person name="Dathorne S.R."/>
            <person name="David R."/>
            <person name="Davis C.M."/>
            <person name="Davy-Carroll L."/>
            <person name="Deshazo D.R."/>
            <person name="Donlin J.E."/>
            <person name="D'Souza L."/>
            <person name="Eaves K.A."/>
            <person name="Egan A."/>
            <person name="Emery-Cohen A.J."/>
            <person name="Escotto M."/>
            <person name="Flagg N."/>
            <person name="Forbes L.D."/>
            <person name="Gabisi A.M."/>
            <person name="Garza M."/>
            <person name="Hamilton C."/>
            <person name="Henderson N."/>
            <person name="Hernandez O."/>
            <person name="Hines S."/>
            <person name="Hogues M.E."/>
            <person name="Huang M."/>
            <person name="Idlebird D.G."/>
            <person name="Johnson R."/>
            <person name="Jolivet A."/>
            <person name="Jones S."/>
            <person name="Kagan R."/>
            <person name="King L.M."/>
            <person name="Leal B."/>
            <person name="Lebow H."/>
            <person name="Lee S."/>
            <person name="LeVan J.M."/>
            <person name="Lewis L.C."/>
            <person name="London P."/>
            <person name="Lorensuhewa L.M."/>
            <person name="Loulseged H."/>
            <person name="Lovett D.A."/>
            <person name="Lucier A."/>
            <person name="Lucier R.L."/>
            <person name="Ma J."/>
            <person name="Madu R.C."/>
            <person name="Mapua P."/>
            <person name="Martindale A.D."/>
            <person name="Martinez E."/>
            <person name="Massey E."/>
            <person name="Mawhiney S."/>
            <person name="Meador M.G."/>
            <person name="Mendez S."/>
            <person name="Mercado C."/>
            <person name="Mercado I.C."/>
            <person name="Merritt C.E."/>
            <person name="Miner Z.L."/>
            <person name="Minja E."/>
            <person name="Mitchell T."/>
            <person name="Mohabbat F."/>
            <person name="Mohabbat K."/>
            <person name="Montgomery B."/>
            <person name="Moore N."/>
            <person name="Morris S."/>
            <person name="Munidasa M."/>
            <person name="Ngo R.N."/>
            <person name="Nguyen N.B."/>
            <person name="Nickerson E."/>
            <person name="Nwaokelemeh O.O."/>
            <person name="Nwokenkwo S."/>
            <person name="Obregon M."/>
            <person name="Oguh M."/>
            <person name="Oragunye N."/>
            <person name="Oviedo R.J."/>
            <person name="Parish B.J."/>
            <person name="Parker D.N."/>
            <person name="Parrish J."/>
            <person name="Parks K.L."/>
            <person name="Paul H.A."/>
            <person name="Payton B.A."/>
            <person name="Perez A."/>
            <person name="Perrin W."/>
            <person name="Pickens A."/>
            <person name="Primus E.L."/>
            <person name="Pu L.-L."/>
            <person name="Puazo M."/>
            <person name="Quiles M.M."/>
            <person name="Quiroz J.B."/>
            <person name="Rabata D."/>
            <person name="Reeves K."/>
            <person name="Ruiz S.J."/>
            <person name="Shao H."/>
            <person name="Sisson I."/>
            <person name="Sonaike T."/>
            <person name="Sorelle R.P."/>
            <person name="Sutton A.E."/>
            <person name="Svatek A.F."/>
            <person name="Svetz L.A."/>
            <person name="Tamerisa K.S."/>
            <person name="Taylor T.R."/>
            <person name="Teague B."/>
            <person name="Thomas N."/>
            <person name="Thorn R.D."/>
            <person name="Trejos Z.Y."/>
            <person name="Trevino B.K."/>
            <person name="Ukegbu O.N."/>
            <person name="Urban J.B."/>
            <person name="Vasquez L.I."/>
            <person name="Vera V.A."/>
            <person name="Villasana D.M."/>
            <person name="Wang L."/>
            <person name="Ward-Moore S."/>
            <person name="Warren J.T."/>
            <person name="Wei X."/>
            <person name="White F."/>
            <person name="Williamson A.L."/>
            <person name="Wleczyk R."/>
            <person name="Wooden H.S."/>
            <person name="Wooden S.H."/>
            <person name="Yen J."/>
            <person name="Yoon L."/>
            <person name="Yoon V."/>
            <person name="Zorrilla S.E."/>
            <person name="Nelson D."/>
            <person name="Kucherlapati R."/>
            <person name="Weinstock G."/>
            <person name="Gibbs R.A."/>
        </authorList>
    </citation>
    <scope>NUCLEOTIDE SEQUENCE [LARGE SCALE GENOMIC DNA]</scope>
</reference>
<reference key="4">
    <citation type="journal article" date="2004" name="Genome Res.">
        <title>The status, quality, and expansion of the NIH full-length cDNA project: the Mammalian Gene Collection (MGC).</title>
        <authorList>
            <consortium name="The MGC Project Team"/>
        </authorList>
    </citation>
    <scope>NUCLEOTIDE SEQUENCE [LARGE SCALE MRNA] (ISOFORM 1)</scope>
    <source>
        <tissue>Skin</tissue>
    </source>
</reference>
<reference key="5">
    <citation type="journal article" date="2005" name="J. Biol. Chem.">
        <title>FLN29, a novel interferon- and LPS-inducible gene acting as a negative regulator of toll-like receptor signaling.</title>
        <authorList>
            <person name="Mashima R."/>
            <person name="Saeki K."/>
            <person name="Aki D."/>
            <person name="Minoda Y."/>
            <person name="Takaki H."/>
            <person name="Sanada T."/>
            <person name="Kobayashi T."/>
            <person name="Aburatani H."/>
            <person name="Yamanashi Y."/>
            <person name="Yoshimura A."/>
        </authorList>
    </citation>
    <scope>FUNCTION</scope>
    <scope>INTERACTION WITH TRAF6</scope>
</reference>
<reference key="6">
    <citation type="journal article" date="2006" name="Cell">
        <title>Global, in vivo, and site-specific phosphorylation dynamics in signaling networks.</title>
        <authorList>
            <person name="Olsen J.V."/>
            <person name="Blagoev B."/>
            <person name="Gnad F."/>
            <person name="Macek B."/>
            <person name="Kumar C."/>
            <person name="Mortensen P."/>
            <person name="Mann M."/>
        </authorList>
    </citation>
    <scope>IDENTIFICATION BY MASS SPECTROMETRY [LARGE SCALE ANALYSIS]</scope>
    <source>
        <tissue>Cervix carcinoma</tissue>
    </source>
</reference>
<reference key="7">
    <citation type="journal article" date="2006" name="Nat. Biotechnol.">
        <title>A probability-based approach for high-throughput protein phosphorylation analysis and site localization.</title>
        <authorList>
            <person name="Beausoleil S.A."/>
            <person name="Villen J."/>
            <person name="Gerber S.A."/>
            <person name="Rush J."/>
            <person name="Gygi S.P."/>
        </authorList>
    </citation>
    <scope>PHOSPHORYLATION [LARGE SCALE ANALYSIS] AT SER-415</scope>
    <scope>IDENTIFICATION BY MASS SPECTROMETRY [LARGE SCALE ANALYSIS]</scope>
    <source>
        <tissue>Cervix carcinoma</tissue>
    </source>
</reference>
<reference key="8">
    <citation type="journal article" date="2008" name="Mol. Cell">
        <title>Kinase-selective enrichment enables quantitative phosphoproteomics of the kinome across the cell cycle.</title>
        <authorList>
            <person name="Daub H."/>
            <person name="Olsen J.V."/>
            <person name="Bairlein M."/>
            <person name="Gnad F."/>
            <person name="Oppermann F.S."/>
            <person name="Korner R."/>
            <person name="Greff Z."/>
            <person name="Keri G."/>
            <person name="Stemmann O."/>
            <person name="Mann M."/>
        </authorList>
    </citation>
    <scope>IDENTIFICATION BY MASS SPECTROMETRY [LARGE SCALE ANALYSIS]</scope>
    <source>
        <tissue>Cervix carcinoma</tissue>
    </source>
</reference>
<reference key="9">
    <citation type="journal article" date="2008" name="Proc. Natl. Acad. Sci. U.S.A.">
        <title>A quantitative atlas of mitotic phosphorylation.</title>
        <authorList>
            <person name="Dephoure N."/>
            <person name="Zhou C."/>
            <person name="Villen J."/>
            <person name="Beausoleil S.A."/>
            <person name="Bakalarski C.E."/>
            <person name="Elledge S.J."/>
            <person name="Gygi S.P."/>
        </authorList>
    </citation>
    <scope>PHOSPHORYLATION [LARGE SCALE ANALYSIS] AT SER-327; SER-415 AND SER-470</scope>
    <scope>IDENTIFICATION BY MASS SPECTROMETRY [LARGE SCALE ANALYSIS]</scope>
    <source>
        <tissue>Cervix carcinoma</tissue>
    </source>
</reference>
<reference key="10">
    <citation type="journal article" date="2009" name="Anal. Chem.">
        <title>Lys-N and trypsin cover complementary parts of the phosphoproteome in a refined SCX-based approach.</title>
        <authorList>
            <person name="Gauci S."/>
            <person name="Helbig A.O."/>
            <person name="Slijper M."/>
            <person name="Krijgsveld J."/>
            <person name="Heck A.J."/>
            <person name="Mohammed S."/>
        </authorList>
    </citation>
    <scope>IDENTIFICATION BY MASS SPECTROMETRY [LARGE SCALE ANALYSIS]</scope>
</reference>
<reference key="11">
    <citation type="journal article" date="2009" name="Mol. Cell. Proteomics">
        <title>Large-scale proteomics analysis of the human kinome.</title>
        <authorList>
            <person name="Oppermann F.S."/>
            <person name="Gnad F."/>
            <person name="Olsen J.V."/>
            <person name="Hornberger R."/>
            <person name="Greff Z."/>
            <person name="Keri G."/>
            <person name="Mann M."/>
            <person name="Daub H."/>
        </authorList>
    </citation>
    <scope>IDENTIFICATION BY MASS SPECTROMETRY [LARGE SCALE ANALYSIS]</scope>
</reference>
<reference key="12">
    <citation type="journal article" date="2009" name="Sci. Signal.">
        <title>Quantitative phosphoproteomic analysis of T cell receptor signaling reveals system-wide modulation of protein-protein interactions.</title>
        <authorList>
            <person name="Mayya V."/>
            <person name="Lundgren D.H."/>
            <person name="Hwang S.-I."/>
            <person name="Rezaul K."/>
            <person name="Wu L."/>
            <person name="Eng J.K."/>
            <person name="Rodionov V."/>
            <person name="Han D.K."/>
        </authorList>
    </citation>
    <scope>PHOSPHORYLATION [LARGE SCALE ANALYSIS] AT SER-415</scope>
    <scope>IDENTIFICATION BY MASS SPECTROMETRY [LARGE SCALE ANALYSIS]</scope>
    <source>
        <tissue>Leukemic T-cell</tissue>
    </source>
</reference>
<reference key="13">
    <citation type="journal article" date="2010" name="Sci. Signal.">
        <title>Quantitative phosphoproteomics reveals widespread full phosphorylation site occupancy during mitosis.</title>
        <authorList>
            <person name="Olsen J.V."/>
            <person name="Vermeulen M."/>
            <person name="Santamaria A."/>
            <person name="Kumar C."/>
            <person name="Miller M.L."/>
            <person name="Jensen L.J."/>
            <person name="Gnad F."/>
            <person name="Cox J."/>
            <person name="Jensen T.S."/>
            <person name="Nigg E.A."/>
            <person name="Brunak S."/>
            <person name="Mann M."/>
        </authorList>
    </citation>
    <scope>PHOSPHORYLATION [LARGE SCALE ANALYSIS] AT SER-327 AND SER-415</scope>
    <scope>IDENTIFICATION BY MASS SPECTROMETRY [LARGE SCALE ANALYSIS]</scope>
    <source>
        <tissue>Cervix carcinoma</tissue>
    </source>
</reference>
<reference key="14">
    <citation type="journal article" date="2011" name="BMC Syst. Biol.">
        <title>Initial characterization of the human central proteome.</title>
        <authorList>
            <person name="Burkard T.R."/>
            <person name="Planyavsky M."/>
            <person name="Kaupe I."/>
            <person name="Breitwieser F.P."/>
            <person name="Buerckstuemmer T."/>
            <person name="Bennett K.L."/>
            <person name="Superti-Furga G."/>
            <person name="Colinge J."/>
        </authorList>
    </citation>
    <scope>IDENTIFICATION BY MASS SPECTROMETRY [LARGE SCALE ANALYSIS]</scope>
</reference>
<reference key="15">
    <citation type="journal article" date="2011" name="Sci. Signal.">
        <title>System-wide temporal characterization of the proteome and phosphoproteome of human embryonic stem cell differentiation.</title>
        <authorList>
            <person name="Rigbolt K.T."/>
            <person name="Prokhorova T.A."/>
            <person name="Akimov V."/>
            <person name="Henningsen J."/>
            <person name="Johansen P.T."/>
            <person name="Kratchmarova I."/>
            <person name="Kassem M."/>
            <person name="Mann M."/>
            <person name="Olsen J.V."/>
            <person name="Blagoev B."/>
        </authorList>
    </citation>
    <scope>PHOSPHORYLATION [LARGE SCALE ANALYSIS] AT SER-326; SER-327 AND SER-415</scope>
    <scope>IDENTIFICATION BY MASS SPECTROMETRY [LARGE SCALE ANALYSIS]</scope>
</reference>
<reference key="16">
    <citation type="journal article" date="2012" name="Proc. Natl. Acad. Sci. U.S.A.">
        <title>N-terminal acetylome analyses and functional insights of the N-terminal acetyltransferase NatB.</title>
        <authorList>
            <person name="Van Damme P."/>
            <person name="Lasa M."/>
            <person name="Polevoda B."/>
            <person name="Gazquez C."/>
            <person name="Elosegui-Artola A."/>
            <person name="Kim D.S."/>
            <person name="De Juan-Pardo E."/>
            <person name="Demeyer K."/>
            <person name="Hole K."/>
            <person name="Larrea E."/>
            <person name="Timmerman E."/>
            <person name="Prieto J."/>
            <person name="Arnesen T."/>
            <person name="Sherman F."/>
            <person name="Gevaert K."/>
            <person name="Aldabe R."/>
        </authorList>
    </citation>
    <scope>ACETYLATION [LARGE SCALE ANALYSIS] AT ALA-2</scope>
    <scope>CLEAVAGE OF INITIATOR METHIONINE [LARGE SCALE ANALYSIS]</scope>
    <scope>IDENTIFICATION BY MASS SPECTROMETRY [LARGE SCALE ANALYSIS]</scope>
</reference>
<reference key="17">
    <citation type="journal article" date="2013" name="J. Proteome Res.">
        <title>Toward a comprehensive characterization of a human cancer cell phosphoproteome.</title>
        <authorList>
            <person name="Zhou H."/>
            <person name="Di Palma S."/>
            <person name="Preisinger C."/>
            <person name="Peng M."/>
            <person name="Polat A.N."/>
            <person name="Heck A.J."/>
            <person name="Mohammed S."/>
        </authorList>
    </citation>
    <scope>PHOSPHORYLATION [LARGE SCALE ANALYSIS] AT SER-191; SER-278; SER-327; SER-409; SER-415 AND SER-430</scope>
    <scope>IDENTIFICATION BY MASS SPECTROMETRY [LARGE SCALE ANALYSIS]</scope>
    <source>
        <tissue>Cervix carcinoma</tissue>
        <tissue>Erythroleukemia</tissue>
    </source>
</reference>
<reference key="18">
    <citation type="journal article" date="2014" name="J. Proteomics">
        <title>An enzyme assisted RP-RPLC approach for in-depth analysis of human liver phosphoproteome.</title>
        <authorList>
            <person name="Bian Y."/>
            <person name="Song C."/>
            <person name="Cheng K."/>
            <person name="Dong M."/>
            <person name="Wang F."/>
            <person name="Huang J."/>
            <person name="Sun D."/>
            <person name="Wang L."/>
            <person name="Ye M."/>
            <person name="Zou H."/>
        </authorList>
    </citation>
    <scope>PHOSPHORYLATION [LARGE SCALE ANALYSIS] AT SER-320; SER-327; SER-409 AND SER-415</scope>
    <scope>IDENTIFICATION BY MASS SPECTROMETRY [LARGE SCALE ANALYSIS]</scope>
    <source>
        <tissue>Liver</tissue>
    </source>
</reference>
<reference key="19">
    <citation type="submission" date="2006-06" db="PDB data bank">
        <title>Solution structure of the ZF-TRAF domain of FLN29 gene product.</title>
        <authorList>
            <consortium name="RIKEN structural genomics initiative (RSGI)"/>
        </authorList>
    </citation>
    <scope>STRUCTURE BY NMR OF 78-139 IN COMPLEX WITH ZINC IONS</scope>
</reference>
<comment type="function">
    <text evidence="1 3">Negative feedback regulator that controls excessive innate immune responses. Regulates both Toll-like receptor 4 (TLR4) and DDX58/RIG1-like helicases (RLH) pathways. May inhibit the LTR pathway by direct interaction with TRAF6 and attenuation of NF-kappa-B activation. May negatively regulate the RLH pathway downstream from MAVS and upstream of NF-kappa-B and IRF3 (By similarity).</text>
</comment>
<comment type="subunit">
    <text evidence="1 3 4">Interacts with MAVS, TICAM1, TRAF1, TRAF2, TRAF3 (By similarity). Interacts with TRAF6.</text>
</comment>
<comment type="interaction">
    <interactant intactId="EBI-1396921">
        <id>O14545</id>
    </interactant>
    <interactant intactId="EBI-349854">
        <id>P13569</id>
        <label>CFTR</label>
    </interactant>
    <organismsDiffer>false</organismsDiffer>
    <experiments>9</experiments>
</comment>
<comment type="interaction">
    <interactant intactId="EBI-1396921">
        <id>O14545</id>
    </interactant>
    <interactant intactId="EBI-466029">
        <id>P42858</id>
        <label>HTT</label>
    </interactant>
    <organismsDiffer>false</organismsDiffer>
    <experiments>5</experiments>
</comment>
<comment type="interaction">
    <interactant intactId="EBI-1396921">
        <id>O14545</id>
    </interactant>
    <interactant intactId="EBI-6165879">
        <id>Q96IV0</id>
        <label>NGLY1</label>
    </interactant>
    <organismsDiffer>false</organismsDiffer>
    <experiments>7</experiments>
</comment>
<comment type="alternative products">
    <event type="alternative splicing"/>
    <isoform>
        <id>O14545-1</id>
        <name>1</name>
        <sequence type="displayed"/>
    </isoform>
    <isoform>
        <id>O14545-2</id>
        <name>2</name>
        <sequence type="described" ref="VSP_056085 VSP_056086"/>
    </isoform>
</comment>
<organism>
    <name type="scientific">Homo sapiens</name>
    <name type="common">Human</name>
    <dbReference type="NCBI Taxonomy" id="9606"/>
    <lineage>
        <taxon>Eukaryota</taxon>
        <taxon>Metazoa</taxon>
        <taxon>Chordata</taxon>
        <taxon>Craniata</taxon>
        <taxon>Vertebrata</taxon>
        <taxon>Euteleostomi</taxon>
        <taxon>Mammalia</taxon>
        <taxon>Eutheria</taxon>
        <taxon>Euarchontoglires</taxon>
        <taxon>Primates</taxon>
        <taxon>Haplorrhini</taxon>
        <taxon>Catarrhini</taxon>
        <taxon>Hominidae</taxon>
        <taxon>Homo</taxon>
    </lineage>
</organism>
<gene>
    <name type="primary">TRAFD1</name>
    <name type="synonym">FLN29</name>
</gene>
<feature type="initiator methionine" description="Removed" evidence="12">
    <location>
        <position position="1"/>
    </location>
</feature>
<feature type="chain" id="PRO_0000278457" description="TRAF-type zinc finger domain-containing protein 1">
    <location>
        <begin position="2"/>
        <end position="582"/>
    </location>
</feature>
<feature type="zinc finger region" description="TRAF-type">
    <location>
        <begin position="27"/>
        <end position="103"/>
    </location>
</feature>
<feature type="region of interest" description="Disordered" evidence="2">
    <location>
        <begin position="217"/>
        <end position="236"/>
    </location>
</feature>
<feature type="region of interest" description="Disordered" evidence="2">
    <location>
        <begin position="401"/>
        <end position="582"/>
    </location>
</feature>
<feature type="compositionally biased region" description="Polar residues" evidence="2">
    <location>
        <begin position="454"/>
        <end position="471"/>
    </location>
</feature>
<feature type="compositionally biased region" description="Polar residues" evidence="2">
    <location>
        <begin position="486"/>
        <end position="495"/>
    </location>
</feature>
<feature type="modified residue" description="N-acetylalanine" evidence="12">
    <location>
        <position position="2"/>
    </location>
</feature>
<feature type="modified residue" description="Phosphoserine" evidence="13">
    <location>
        <position position="191"/>
    </location>
</feature>
<feature type="modified residue" description="Phosphoserine" evidence="13">
    <location>
        <position position="278"/>
    </location>
</feature>
<feature type="modified residue" description="Phosphoserine" evidence="14">
    <location>
        <position position="320"/>
    </location>
</feature>
<feature type="modified residue" description="Phosphoserine" evidence="11">
    <location>
        <position position="326"/>
    </location>
</feature>
<feature type="modified residue" description="Phosphoserine" evidence="8 10 11 13 14">
    <location>
        <position position="327"/>
    </location>
</feature>
<feature type="modified residue" description="Phosphoserine" evidence="13 14">
    <location>
        <position position="409"/>
    </location>
</feature>
<feature type="modified residue" description="Phosphoserine" evidence="7 8 9 10 11 13 14">
    <location>
        <position position="415"/>
    </location>
</feature>
<feature type="modified residue" description="Phosphoserine" evidence="13">
    <location>
        <position position="430"/>
    </location>
</feature>
<feature type="modified residue" description="Phosphoserine" evidence="8">
    <location>
        <position position="470"/>
    </location>
</feature>
<feature type="splice variant" id="VSP_056085" description="In isoform 2." evidence="5">
    <original>VCGREGEEKRNEVAIPPNAYDESWGQDGIWI</original>
    <variation>LKNKRGRKGIEANSPPKRVVKRVQTWTSCWP</variation>
    <location>
        <begin position="134"/>
        <end position="164"/>
    </location>
</feature>
<feature type="splice variant" id="VSP_056086" description="In isoform 2." evidence="5">
    <location>
        <begin position="165"/>
        <end position="582"/>
    </location>
</feature>
<feature type="sequence conflict" description="In Ref. 2; BAF84020." evidence="6" ref="2">
    <original>E</original>
    <variation>V</variation>
    <location>
        <position position="138"/>
    </location>
</feature>
<feature type="strand" evidence="15">
    <location>
        <begin position="91"/>
        <end position="93"/>
    </location>
</feature>
<feature type="helix" evidence="15">
    <location>
        <begin position="99"/>
        <end position="111"/>
    </location>
</feature>
<feature type="strand" evidence="15">
    <location>
        <begin position="113"/>
        <end position="115"/>
    </location>
</feature>
<feature type="strand" evidence="15">
    <location>
        <begin position="117"/>
        <end position="119"/>
    </location>
</feature>
<feature type="strand" evidence="15">
    <location>
        <begin position="122"/>
        <end position="124"/>
    </location>
</feature>
<feature type="helix" evidence="15">
    <location>
        <begin position="127"/>
        <end position="129"/>
    </location>
</feature>
<feature type="helix" evidence="15">
    <location>
        <begin position="131"/>
        <end position="134"/>
    </location>
</feature>
<protein>
    <recommendedName>
        <fullName>TRAF-type zinc finger domain-containing protein 1</fullName>
    </recommendedName>
    <alternativeName>
        <fullName>Protein FLN29</fullName>
    </alternativeName>
</protein>
<proteinExistence type="evidence at protein level"/>
<sequence>MAEFLDDQETRLCDNCKKEIPVFNFTIHEIHCQRNIGMCPTCKEPFPKSDMETHMAAEHCQVTCKCNKKLEKRLLKKHEETECPLRLAVCQHCDLELSILKLKEHEDYCGARTELCGNCGRNVLVKDLKTHPEVCGREGEEKRNEVAIPPNAYDESWGQDGIWIASQLLRQIEALDPPMRLPRRPLRAFESDVFHNRTTNQRNITAQVSIQNNLFEEQERQERNRGQQPPKEGGEESANLDFMLALSLQNEGQASSVAEQDFWRAVCEADQSHGGPRSLSDIKGAADEIMLPCEFCEELYPEELLIDHQTSCNPSRALPSLNTGSSSPRGVEEPDVIFQNFLQQAASNQLDSLMGLSNSHPVEESIIIPCEFCGVQLEEEVLFHHQDQCDQRPATATNHVTEGIPRLDSQPQETSPELPRRRVRHQGDLSSGYLDDTKQETANGPTSCLPPSRPINNMTATYNQLSRSTSGPRPGCQPSSPCVPKLSNSDSQDIQGRNRDSQNGAIAPGHVSVIRPPQNLYPENIVPSFSPGPSGRYGASGRSEGGRNSRVTPAAANYRSRTAKAKPSKQQGAGDAEEEEEE</sequence>
<keyword id="KW-0002">3D-structure</keyword>
<keyword id="KW-0007">Acetylation</keyword>
<keyword id="KW-0025">Alternative splicing</keyword>
<keyword id="KW-0479">Metal-binding</keyword>
<keyword id="KW-0597">Phosphoprotein</keyword>
<keyword id="KW-1267">Proteomics identification</keyword>
<keyword id="KW-1185">Reference proteome</keyword>
<keyword id="KW-0862">Zinc</keyword>
<keyword id="KW-0863">Zinc-finger</keyword>
<name>TRAD1_HUMAN</name>